<comment type="function">
    <text evidence="1">Produces ATP from ADP in the presence of a proton gradient across the membrane. The gamma chain is believed to be important in regulating ATPase activity and the flow of protons through the CF(0) complex.</text>
</comment>
<comment type="subunit">
    <text evidence="1">F-type ATPases have 2 components, CF(1) - the catalytic core - and CF(0) - the membrane proton channel. CF(1) has five subunits: alpha(3), beta(3), gamma(1), delta(1), epsilon(1). CF(0) has three main subunits: a, b and c.</text>
</comment>
<comment type="subcellular location">
    <subcellularLocation>
        <location evidence="1">Cell inner membrane</location>
        <topology evidence="1">Peripheral membrane protein</topology>
    </subcellularLocation>
</comment>
<comment type="similarity">
    <text evidence="1">Belongs to the ATPase gamma chain family.</text>
</comment>
<name>ATPG_FRATF</name>
<sequence length="298" mass="33187">MSNAREIRSKVQSVKNTQKITGAMELVAASKMRGAIVKMNNVRPYVESANTIIKNVTAASIDYPNPYLFDRDVKRVGYIVTSTDRGLCGGLNINLFKHVLKEIKNNIEDRVGVDVCVIGSKAENFFAKLKDVNIVATAHYNDKDKEGSIRAIGGAVKVMLDKFTAGEIDRLYMSSNQFVSTIKQRPRLQTLLPIQDIFSAEEIKANKEKATKGHWDYIYERDIEEVLNALCIRYIEAQVRGAILENAACEQAARMMAMKNATDNASDIIDQLKLDYNKVRQAMITQELAEICSGAAAV</sequence>
<evidence type="ECO:0000255" key="1">
    <source>
        <dbReference type="HAMAP-Rule" id="MF_00815"/>
    </source>
</evidence>
<organism>
    <name type="scientific">Francisella tularensis subsp. holarctica (strain FTNF002-00 / FTA)</name>
    <dbReference type="NCBI Taxonomy" id="458234"/>
    <lineage>
        <taxon>Bacteria</taxon>
        <taxon>Pseudomonadati</taxon>
        <taxon>Pseudomonadota</taxon>
        <taxon>Gammaproteobacteria</taxon>
        <taxon>Thiotrichales</taxon>
        <taxon>Francisellaceae</taxon>
        <taxon>Francisella</taxon>
    </lineage>
</organism>
<dbReference type="EMBL" id="CP000803">
    <property type="protein sequence ID" value="ABU62378.2"/>
    <property type="molecule type" value="Genomic_DNA"/>
</dbReference>
<dbReference type="RefSeq" id="WP_003019684.1">
    <property type="nucleotide sequence ID" value="NC_009749.1"/>
</dbReference>
<dbReference type="SMR" id="A7NEH5"/>
<dbReference type="KEGG" id="fta:FTA_1903"/>
<dbReference type="HOGENOM" id="CLU_050669_0_1_6"/>
<dbReference type="GO" id="GO:0005886">
    <property type="term" value="C:plasma membrane"/>
    <property type="evidence" value="ECO:0007669"/>
    <property type="project" value="UniProtKB-SubCell"/>
</dbReference>
<dbReference type="GO" id="GO:0045259">
    <property type="term" value="C:proton-transporting ATP synthase complex"/>
    <property type="evidence" value="ECO:0007669"/>
    <property type="project" value="UniProtKB-KW"/>
</dbReference>
<dbReference type="GO" id="GO:0005524">
    <property type="term" value="F:ATP binding"/>
    <property type="evidence" value="ECO:0007669"/>
    <property type="project" value="UniProtKB-UniRule"/>
</dbReference>
<dbReference type="GO" id="GO:0046933">
    <property type="term" value="F:proton-transporting ATP synthase activity, rotational mechanism"/>
    <property type="evidence" value="ECO:0007669"/>
    <property type="project" value="UniProtKB-UniRule"/>
</dbReference>
<dbReference type="GO" id="GO:0042777">
    <property type="term" value="P:proton motive force-driven plasma membrane ATP synthesis"/>
    <property type="evidence" value="ECO:0007669"/>
    <property type="project" value="UniProtKB-UniRule"/>
</dbReference>
<dbReference type="CDD" id="cd12151">
    <property type="entry name" value="F1-ATPase_gamma"/>
    <property type="match status" value="1"/>
</dbReference>
<dbReference type="Gene3D" id="3.40.1380.10">
    <property type="match status" value="1"/>
</dbReference>
<dbReference type="Gene3D" id="1.10.287.80">
    <property type="entry name" value="ATP synthase, gamma subunit, helix hairpin domain"/>
    <property type="match status" value="1"/>
</dbReference>
<dbReference type="HAMAP" id="MF_00815">
    <property type="entry name" value="ATP_synth_gamma_bact"/>
    <property type="match status" value="1"/>
</dbReference>
<dbReference type="InterPro" id="IPR035968">
    <property type="entry name" value="ATP_synth_F1_ATPase_gsu"/>
</dbReference>
<dbReference type="InterPro" id="IPR000131">
    <property type="entry name" value="ATP_synth_F1_gsu"/>
</dbReference>
<dbReference type="InterPro" id="IPR023632">
    <property type="entry name" value="ATP_synth_F1_gsu_CS"/>
</dbReference>
<dbReference type="NCBIfam" id="TIGR01146">
    <property type="entry name" value="ATPsyn_F1gamma"/>
    <property type="match status" value="1"/>
</dbReference>
<dbReference type="NCBIfam" id="NF009956">
    <property type="entry name" value="PRK13422.1"/>
    <property type="match status" value="1"/>
</dbReference>
<dbReference type="PANTHER" id="PTHR11693">
    <property type="entry name" value="ATP SYNTHASE GAMMA CHAIN"/>
    <property type="match status" value="1"/>
</dbReference>
<dbReference type="PANTHER" id="PTHR11693:SF22">
    <property type="entry name" value="ATP SYNTHASE SUBUNIT GAMMA, MITOCHONDRIAL"/>
    <property type="match status" value="1"/>
</dbReference>
<dbReference type="Pfam" id="PF00231">
    <property type="entry name" value="ATP-synt"/>
    <property type="match status" value="1"/>
</dbReference>
<dbReference type="PRINTS" id="PR00126">
    <property type="entry name" value="ATPASEGAMMA"/>
</dbReference>
<dbReference type="SUPFAM" id="SSF52943">
    <property type="entry name" value="ATP synthase (F1-ATPase), gamma subunit"/>
    <property type="match status" value="1"/>
</dbReference>
<dbReference type="PROSITE" id="PS00153">
    <property type="entry name" value="ATPASE_GAMMA"/>
    <property type="match status" value="1"/>
</dbReference>
<gene>
    <name evidence="1" type="primary">atpG</name>
    <name type="ordered locus">FTA_1903</name>
</gene>
<feature type="chain" id="PRO_1000083788" description="ATP synthase gamma chain">
    <location>
        <begin position="1"/>
        <end position="298"/>
    </location>
</feature>
<reference key="1">
    <citation type="journal article" date="2009" name="PLoS ONE">
        <title>Complete genome sequence of Francisella tularensis subspecies holarctica FTNF002-00.</title>
        <authorList>
            <person name="Barabote R.D."/>
            <person name="Xie G."/>
            <person name="Brettin T.S."/>
            <person name="Hinrichs S.H."/>
            <person name="Fey P.D."/>
            <person name="Jay J.J."/>
            <person name="Engle J.L."/>
            <person name="Godbole S.D."/>
            <person name="Noronha J.M."/>
            <person name="Scheuermann R.H."/>
            <person name="Zhou L.W."/>
            <person name="Lion C."/>
            <person name="Dempsey M.P."/>
        </authorList>
    </citation>
    <scope>NUCLEOTIDE SEQUENCE [LARGE SCALE GENOMIC DNA]</scope>
    <source>
        <strain>FTNF002-00 / FTA</strain>
    </source>
</reference>
<accession>A7NEH5</accession>
<keyword id="KW-0066">ATP synthesis</keyword>
<keyword id="KW-0997">Cell inner membrane</keyword>
<keyword id="KW-1003">Cell membrane</keyword>
<keyword id="KW-0139">CF(1)</keyword>
<keyword id="KW-0375">Hydrogen ion transport</keyword>
<keyword id="KW-0406">Ion transport</keyword>
<keyword id="KW-0472">Membrane</keyword>
<keyword id="KW-0813">Transport</keyword>
<proteinExistence type="inferred from homology"/>
<protein>
    <recommendedName>
        <fullName evidence="1">ATP synthase gamma chain</fullName>
    </recommendedName>
    <alternativeName>
        <fullName evidence="1">ATP synthase F1 sector gamma subunit</fullName>
    </alternativeName>
    <alternativeName>
        <fullName evidence="1">F-ATPase gamma subunit</fullName>
    </alternativeName>
</protein>